<accession>Q5ZIL6</accession>
<protein>
    <recommendedName>
        <fullName evidence="5">Transmembrane protein 41B</fullName>
    </recommendedName>
</protein>
<organism>
    <name type="scientific">Gallus gallus</name>
    <name type="common">Chicken</name>
    <dbReference type="NCBI Taxonomy" id="9031"/>
    <lineage>
        <taxon>Eukaryota</taxon>
        <taxon>Metazoa</taxon>
        <taxon>Chordata</taxon>
        <taxon>Craniata</taxon>
        <taxon>Vertebrata</taxon>
        <taxon>Euteleostomi</taxon>
        <taxon>Archelosauria</taxon>
        <taxon>Archosauria</taxon>
        <taxon>Dinosauria</taxon>
        <taxon>Saurischia</taxon>
        <taxon>Theropoda</taxon>
        <taxon>Coelurosauria</taxon>
        <taxon>Aves</taxon>
        <taxon>Neognathae</taxon>
        <taxon>Galloanserae</taxon>
        <taxon>Galliformes</taxon>
        <taxon>Phasianidae</taxon>
        <taxon>Phasianinae</taxon>
        <taxon>Gallus</taxon>
    </lineage>
</organism>
<gene>
    <name evidence="2" type="primary">TMEM41B</name>
    <name evidence="4" type="ORF">RCJMB04_25c20</name>
</gene>
<proteinExistence type="evidence at transcript level"/>
<reference key="1">
    <citation type="journal article" date="2005" name="Genome Biol.">
        <title>Full-length cDNAs from chicken bursal lymphocytes to facilitate gene function analysis.</title>
        <authorList>
            <person name="Caldwell R.B."/>
            <person name="Kierzek A.M."/>
            <person name="Arakawa H."/>
            <person name="Bezzubov Y."/>
            <person name="Zaim J."/>
            <person name="Fiedler P."/>
            <person name="Kutter S."/>
            <person name="Blagodatski A."/>
            <person name="Kostovska D."/>
            <person name="Koter M."/>
            <person name="Plachy J."/>
            <person name="Carninci P."/>
            <person name="Hayashizaki Y."/>
            <person name="Buerstedde J.-M."/>
        </authorList>
    </citation>
    <scope>NUCLEOTIDE SEQUENCE [LARGE SCALE MRNA]</scope>
    <source>
        <strain>CB</strain>
        <tissue>Bursa of Fabricius</tissue>
    </source>
</reference>
<comment type="function">
    <text evidence="1 2">Phospholipid scramblase involved in lipid homeostasis and membrane dynamics processes. Has phospholipid scramblase activity toward cholesterol and phosphatidylserine, as well as phosphatidylethanolamine and phosphatidylcholine. Required for autophagosome formation: participates in early stages of autophagosome biogenesis at the endoplasmic reticulum (ER) membrane by reequilibrating the leaflets of the ER as lipids are extracted by ATG2 (ATG2A or ATG2B) to mediate autophagosome assembly. In addition to autophagy, involved in other processes in which phospholipid scramblase activity is required (By similarity). Required for normal motor neuron development (By similarity).</text>
</comment>
<comment type="catalytic activity">
    <reaction evidence="2">
        <text>a 1,2-diacyl-sn-glycero-3-phospho-L-serine(in) = a 1,2-diacyl-sn-glycero-3-phospho-L-serine(out)</text>
        <dbReference type="Rhea" id="RHEA:38663"/>
        <dbReference type="ChEBI" id="CHEBI:57262"/>
    </reaction>
</comment>
<comment type="catalytic activity">
    <reaction evidence="2">
        <text>cholesterol(in) = cholesterol(out)</text>
        <dbReference type="Rhea" id="RHEA:39747"/>
        <dbReference type="ChEBI" id="CHEBI:16113"/>
    </reaction>
</comment>
<comment type="catalytic activity">
    <reaction evidence="2">
        <text>a 1,2-diacyl-sn-glycero-3-phosphocholine(in) = a 1,2-diacyl-sn-glycero-3-phosphocholine(out)</text>
        <dbReference type="Rhea" id="RHEA:38571"/>
        <dbReference type="ChEBI" id="CHEBI:57643"/>
    </reaction>
</comment>
<comment type="catalytic activity">
    <reaction evidence="2">
        <text>a 1,2-diacyl-sn-glycero-3-phosphoethanolamine(in) = a 1,2-diacyl-sn-glycero-3-phosphoethanolamine(out)</text>
        <dbReference type="Rhea" id="RHEA:38895"/>
        <dbReference type="ChEBI" id="CHEBI:64612"/>
    </reaction>
</comment>
<comment type="subcellular location">
    <subcellularLocation>
        <location evidence="2">Endoplasmic reticulum membrane</location>
        <topology evidence="3">Multi-pass membrane protein</topology>
    </subcellularLocation>
    <subcellularLocation>
        <location evidence="2">Endomembrane system</location>
    </subcellularLocation>
    <text evidence="2">Localized to specific membrane structures termed mitochondria-associated membranes (MAMs) which connect the endoplasmic reticulum (ER) and the mitochondria.</text>
</comment>
<comment type="domain">
    <text evidence="2">The VTT domain was previously called the SNARE-assoc domain. As there is no evidence that this domain associates with SNARE proteins, it was renamed as VMP1, TMEM41, and TVP38 (VTT) domain.</text>
</comment>
<comment type="similarity">
    <text evidence="5">Belongs to the TMEM41 family.</text>
</comment>
<dbReference type="EMBL" id="AJ720768">
    <property type="protein sequence ID" value="CAG32427.1"/>
    <property type="molecule type" value="mRNA"/>
</dbReference>
<dbReference type="RefSeq" id="NP_001008469.1">
    <property type="nucleotide sequence ID" value="NM_001008469.2"/>
</dbReference>
<dbReference type="FunCoup" id="Q5ZIL6">
    <property type="interactions" value="1553"/>
</dbReference>
<dbReference type="STRING" id="9031.ENSGALP00000009322"/>
<dbReference type="PaxDb" id="9031-ENSGALP00000009322"/>
<dbReference type="Ensembl" id="ENSGALT00010054950.1">
    <property type="protein sequence ID" value="ENSGALP00010033223.1"/>
    <property type="gene ID" value="ENSGALG00010022575.1"/>
</dbReference>
<dbReference type="GeneID" id="423047"/>
<dbReference type="KEGG" id="gga:423047"/>
<dbReference type="CTD" id="440026"/>
<dbReference type="VEuPathDB" id="HostDB:geneid_423047"/>
<dbReference type="eggNOG" id="KOG3140">
    <property type="taxonomic scope" value="Eukaryota"/>
</dbReference>
<dbReference type="GeneTree" id="ENSGT00940000156956"/>
<dbReference type="HOGENOM" id="CLU_038944_0_1_1"/>
<dbReference type="InParanoid" id="Q5ZIL6"/>
<dbReference type="OMA" id="CIKIPRD"/>
<dbReference type="OrthoDB" id="3364966at2759"/>
<dbReference type="PhylomeDB" id="Q5ZIL6"/>
<dbReference type="TreeFam" id="TF314301"/>
<dbReference type="PRO" id="PR:Q5ZIL6"/>
<dbReference type="Proteomes" id="UP000000539">
    <property type="component" value="Chromosome 5"/>
</dbReference>
<dbReference type="Bgee" id="ENSGALG00000005815">
    <property type="expression patterns" value="Expressed in spermatocyte and 13 other cell types or tissues"/>
</dbReference>
<dbReference type="GO" id="GO:0005789">
    <property type="term" value="C:endoplasmic reticulum membrane"/>
    <property type="evidence" value="ECO:0000250"/>
    <property type="project" value="UniProtKB"/>
</dbReference>
<dbReference type="GO" id="GO:0044233">
    <property type="term" value="C:mitochondria-associated endoplasmic reticulum membrane contact site"/>
    <property type="evidence" value="ECO:0000250"/>
    <property type="project" value="UniProtKB"/>
</dbReference>
<dbReference type="GO" id="GO:0017128">
    <property type="term" value="F:phospholipid scramblase activity"/>
    <property type="evidence" value="ECO:0000250"/>
    <property type="project" value="UniProtKB"/>
</dbReference>
<dbReference type="GO" id="GO:0000045">
    <property type="term" value="P:autophagosome assembly"/>
    <property type="evidence" value="ECO:0000250"/>
    <property type="project" value="UniProtKB"/>
</dbReference>
<dbReference type="GO" id="GO:0007399">
    <property type="term" value="P:nervous system development"/>
    <property type="evidence" value="ECO:0007669"/>
    <property type="project" value="UniProtKB-KW"/>
</dbReference>
<dbReference type="InterPro" id="IPR045014">
    <property type="entry name" value="TM41A/B"/>
</dbReference>
<dbReference type="InterPro" id="IPR032816">
    <property type="entry name" value="VTT_dom"/>
</dbReference>
<dbReference type="PANTHER" id="PTHR43220">
    <property type="match status" value="1"/>
</dbReference>
<dbReference type="PANTHER" id="PTHR43220:SF18">
    <property type="entry name" value="TRANSMEMBRANE PROTEIN 41B"/>
    <property type="match status" value="1"/>
</dbReference>
<dbReference type="Pfam" id="PF09335">
    <property type="entry name" value="VTT_dom"/>
    <property type="match status" value="1"/>
</dbReference>
<keyword id="KW-0072">Autophagy</keyword>
<keyword id="KW-0256">Endoplasmic reticulum</keyword>
<keyword id="KW-0445">Lipid transport</keyword>
<keyword id="KW-0472">Membrane</keyword>
<keyword id="KW-0524">Neurogenesis</keyword>
<keyword id="KW-1185">Reference proteome</keyword>
<keyword id="KW-0812">Transmembrane</keyword>
<keyword id="KW-1133">Transmembrane helix</keyword>
<keyword id="KW-0813">Transport</keyword>
<sequence length="269" mass="30269">MAQRRAAAESARHQRLLEGKAQAEGGSARTSLLILVSIFTIAAFLMFLVYKNFPQLSEEEGKCIKIPRDMDDAKALGKVLSKYKDTFYVQVLVAYFATYVFLQTFAIPGSIFLSILSGFLYPFPLALFLVCLCSGLGASFCYMLSYLVGRPVVYKYLTEKAVKWSEQVERHREHLINYIIFLRITPFLPNWFINITSPVINVPLKVFFIGTFLGVAPPSFVAIKAGTTLYQLTTAGEAVSWNSLFVLMILAILSILPALFQKKLKQKFE</sequence>
<feature type="chain" id="PRO_0000291941" description="Transmembrane protein 41B">
    <location>
        <begin position="1"/>
        <end position="269"/>
    </location>
</feature>
<feature type="transmembrane region" description="Helical" evidence="3">
    <location>
        <begin position="30"/>
        <end position="50"/>
    </location>
</feature>
<feature type="transmembrane region" description="Helical" evidence="3">
    <location>
        <begin position="87"/>
        <end position="107"/>
    </location>
</feature>
<feature type="transmembrane region" description="Helical" evidence="3">
    <location>
        <begin position="125"/>
        <end position="147"/>
    </location>
</feature>
<feature type="transmembrane region" description="Helical" evidence="3">
    <location>
        <begin position="175"/>
        <end position="195"/>
    </location>
</feature>
<feature type="transmembrane region" description="Helical" evidence="3">
    <location>
        <begin position="203"/>
        <end position="223"/>
    </location>
</feature>
<feature type="transmembrane region" description="Helical" evidence="3">
    <location>
        <begin position="240"/>
        <end position="260"/>
    </location>
</feature>
<feature type="region of interest" description="VTT domain; required for its function in autophagy" evidence="2">
    <location>
        <begin position="118"/>
        <end position="229"/>
    </location>
</feature>
<evidence type="ECO:0000250" key="1">
    <source>
        <dbReference type="UniProtKB" id="A1A5V7"/>
    </source>
</evidence>
<evidence type="ECO:0000250" key="2">
    <source>
        <dbReference type="UniProtKB" id="Q5BJD5"/>
    </source>
</evidence>
<evidence type="ECO:0000255" key="3"/>
<evidence type="ECO:0000303" key="4">
    <source>
    </source>
</evidence>
<evidence type="ECO:0000305" key="5"/>
<name>TM41B_CHICK</name>